<keyword id="KW-0067">ATP-binding</keyword>
<keyword id="KW-0963">Cytoplasm</keyword>
<keyword id="KW-0347">Helicase</keyword>
<keyword id="KW-0378">Hydrolase</keyword>
<keyword id="KW-0547">Nucleotide-binding</keyword>
<keyword id="KW-1185">Reference proteome</keyword>
<keyword id="KW-0694">RNA-binding</keyword>
<comment type="function">
    <text evidence="2">DEAD-box RNA helicase involved in RNA degradation. Has RNA-dependent ATPase activity and unwinds double-stranded RNA.</text>
</comment>
<comment type="catalytic activity">
    <reaction evidence="2">
        <text>ATP + H2O = ADP + phosphate + H(+)</text>
        <dbReference type="Rhea" id="RHEA:13065"/>
        <dbReference type="ChEBI" id="CHEBI:15377"/>
        <dbReference type="ChEBI" id="CHEBI:15378"/>
        <dbReference type="ChEBI" id="CHEBI:30616"/>
        <dbReference type="ChEBI" id="CHEBI:43474"/>
        <dbReference type="ChEBI" id="CHEBI:456216"/>
        <dbReference type="EC" id="3.6.4.13"/>
    </reaction>
</comment>
<comment type="subunit">
    <text evidence="2">Component of the RNA degradosome, which is a multiprotein complex involved in RNA processing and mRNA degradation.</text>
</comment>
<comment type="subcellular location">
    <subcellularLocation>
        <location evidence="2">Cytoplasm</location>
    </subcellularLocation>
</comment>
<comment type="similarity">
    <text evidence="2">Belongs to the DEAD box helicase family. RhlB subfamily.</text>
</comment>
<name>RHLB_SHIFL</name>
<organism>
    <name type="scientific">Shigella flexneri</name>
    <dbReference type="NCBI Taxonomy" id="623"/>
    <lineage>
        <taxon>Bacteria</taxon>
        <taxon>Pseudomonadati</taxon>
        <taxon>Pseudomonadota</taxon>
        <taxon>Gammaproteobacteria</taxon>
        <taxon>Enterobacterales</taxon>
        <taxon>Enterobacteriaceae</taxon>
        <taxon>Shigella</taxon>
    </lineage>
</organism>
<dbReference type="EC" id="3.6.4.13" evidence="2"/>
<dbReference type="EMBL" id="AE005674">
    <property type="protein sequence ID" value="AAN45290.1"/>
    <property type="molecule type" value="Genomic_DNA"/>
</dbReference>
<dbReference type="EMBL" id="AE014073">
    <property type="protein sequence ID" value="AAP18907.1"/>
    <property type="molecule type" value="Genomic_DNA"/>
</dbReference>
<dbReference type="RefSeq" id="NP_709583.1">
    <property type="nucleotide sequence ID" value="NC_004337.2"/>
</dbReference>
<dbReference type="RefSeq" id="WP_000047499.1">
    <property type="nucleotide sequence ID" value="NZ_WPGW01000028.1"/>
</dbReference>
<dbReference type="SMR" id="P0A8K0"/>
<dbReference type="STRING" id="198214.SF3853"/>
<dbReference type="PaxDb" id="198214-SF3853"/>
<dbReference type="GeneID" id="1026017"/>
<dbReference type="GeneID" id="93778164"/>
<dbReference type="KEGG" id="sfl:SF3853"/>
<dbReference type="KEGG" id="sfx:S3906"/>
<dbReference type="PATRIC" id="fig|198214.7.peg.4544"/>
<dbReference type="HOGENOM" id="CLU_003041_1_3_6"/>
<dbReference type="Proteomes" id="UP000001006">
    <property type="component" value="Chromosome"/>
</dbReference>
<dbReference type="Proteomes" id="UP000002673">
    <property type="component" value="Chromosome"/>
</dbReference>
<dbReference type="GO" id="GO:0005829">
    <property type="term" value="C:cytosol"/>
    <property type="evidence" value="ECO:0007669"/>
    <property type="project" value="TreeGrafter"/>
</dbReference>
<dbReference type="GO" id="GO:0005524">
    <property type="term" value="F:ATP binding"/>
    <property type="evidence" value="ECO:0007669"/>
    <property type="project" value="UniProtKB-UniRule"/>
</dbReference>
<dbReference type="GO" id="GO:0016887">
    <property type="term" value="F:ATP hydrolysis activity"/>
    <property type="evidence" value="ECO:0007669"/>
    <property type="project" value="RHEA"/>
</dbReference>
<dbReference type="GO" id="GO:0003723">
    <property type="term" value="F:RNA binding"/>
    <property type="evidence" value="ECO:0007669"/>
    <property type="project" value="UniProtKB-UniRule"/>
</dbReference>
<dbReference type="GO" id="GO:0003724">
    <property type="term" value="F:RNA helicase activity"/>
    <property type="evidence" value="ECO:0007669"/>
    <property type="project" value="UniProtKB-UniRule"/>
</dbReference>
<dbReference type="GO" id="GO:0006401">
    <property type="term" value="P:RNA catabolic process"/>
    <property type="evidence" value="ECO:0007669"/>
    <property type="project" value="UniProtKB-UniRule"/>
</dbReference>
<dbReference type="CDD" id="cd00268">
    <property type="entry name" value="DEADc"/>
    <property type="match status" value="1"/>
</dbReference>
<dbReference type="CDD" id="cd18787">
    <property type="entry name" value="SF2_C_DEAD"/>
    <property type="match status" value="1"/>
</dbReference>
<dbReference type="FunFam" id="3.40.50.300:FF:000008">
    <property type="entry name" value="ATP-dependent RNA helicase RhlB"/>
    <property type="match status" value="1"/>
</dbReference>
<dbReference type="FunFam" id="3.40.50.300:FF:000312">
    <property type="entry name" value="ATP-dependent RNA helicase RhlB"/>
    <property type="match status" value="1"/>
</dbReference>
<dbReference type="Gene3D" id="3.40.50.300">
    <property type="entry name" value="P-loop containing nucleotide triphosphate hydrolases"/>
    <property type="match status" value="2"/>
</dbReference>
<dbReference type="HAMAP" id="MF_00661">
    <property type="entry name" value="DEAD_helicase_RhlB"/>
    <property type="match status" value="1"/>
</dbReference>
<dbReference type="InterPro" id="IPR011545">
    <property type="entry name" value="DEAD/DEAH_box_helicase_dom"/>
</dbReference>
<dbReference type="InterPro" id="IPR050079">
    <property type="entry name" value="DEAD_box_RNA_helicase"/>
</dbReference>
<dbReference type="InterPro" id="IPR014001">
    <property type="entry name" value="Helicase_ATP-bd"/>
</dbReference>
<dbReference type="InterPro" id="IPR001650">
    <property type="entry name" value="Helicase_C-like"/>
</dbReference>
<dbReference type="InterPro" id="IPR027417">
    <property type="entry name" value="P-loop_NTPase"/>
</dbReference>
<dbReference type="InterPro" id="IPR000629">
    <property type="entry name" value="RNA-helicase_DEAD-box_CS"/>
</dbReference>
<dbReference type="InterPro" id="IPR023554">
    <property type="entry name" value="RNA_helicase_ATP-dep_RhlB"/>
</dbReference>
<dbReference type="InterPro" id="IPR014014">
    <property type="entry name" value="RNA_helicase_DEAD_Q_motif"/>
</dbReference>
<dbReference type="NCBIfam" id="NF003419">
    <property type="entry name" value="PRK04837.1"/>
    <property type="match status" value="1"/>
</dbReference>
<dbReference type="PANTHER" id="PTHR47959:SF10">
    <property type="entry name" value="ATP-DEPENDENT RNA HELICASE RHLB"/>
    <property type="match status" value="1"/>
</dbReference>
<dbReference type="PANTHER" id="PTHR47959">
    <property type="entry name" value="ATP-DEPENDENT RNA HELICASE RHLE-RELATED"/>
    <property type="match status" value="1"/>
</dbReference>
<dbReference type="Pfam" id="PF00270">
    <property type="entry name" value="DEAD"/>
    <property type="match status" value="1"/>
</dbReference>
<dbReference type="Pfam" id="PF00271">
    <property type="entry name" value="Helicase_C"/>
    <property type="match status" value="1"/>
</dbReference>
<dbReference type="SMART" id="SM00487">
    <property type="entry name" value="DEXDc"/>
    <property type="match status" value="1"/>
</dbReference>
<dbReference type="SMART" id="SM00490">
    <property type="entry name" value="HELICc"/>
    <property type="match status" value="1"/>
</dbReference>
<dbReference type="SUPFAM" id="SSF52540">
    <property type="entry name" value="P-loop containing nucleoside triphosphate hydrolases"/>
    <property type="match status" value="1"/>
</dbReference>
<dbReference type="PROSITE" id="PS00039">
    <property type="entry name" value="DEAD_ATP_HELICASE"/>
    <property type="match status" value="1"/>
</dbReference>
<dbReference type="PROSITE" id="PS51192">
    <property type="entry name" value="HELICASE_ATP_BIND_1"/>
    <property type="match status" value="1"/>
</dbReference>
<dbReference type="PROSITE" id="PS51194">
    <property type="entry name" value="HELICASE_CTER"/>
    <property type="match status" value="1"/>
</dbReference>
<dbReference type="PROSITE" id="PS51195">
    <property type="entry name" value="Q_MOTIF"/>
    <property type="match status" value="1"/>
</dbReference>
<evidence type="ECO:0000250" key="1"/>
<evidence type="ECO:0000255" key="2">
    <source>
        <dbReference type="HAMAP-Rule" id="MF_00661"/>
    </source>
</evidence>
<evidence type="ECO:0000256" key="3">
    <source>
        <dbReference type="SAM" id="MobiDB-lite"/>
    </source>
</evidence>
<sequence>MSKTHLTEQKFSDFALHPKVVEALEKKGFHNCTPIQALALPLTLAGRDVAGQAQTGTGKTMAFLTSTFHYLLSHPAIADRKVNQPRALIMAPTRELAVQIHADAEPLAEATGLKLGLAYGGDGYDKQLKVLESGVDILIGTTGRLIDYAKQNHINLGAIQVVVLDEADRMYDLGFIKDIRWLFRRMPPANQRLNMLFSATLSYRVRELAFEQMNNAEYIEVEPEQKTGHRIKEELFYPSNEEKMRLLQTLIEEEWPDRAIIFANTKHRCEEIWGHLAADGHRVGLLTGDVAQKKRLRILDEFTRGDLDILVATDVAARGLHIPAVTHVFNYDLPDDCEDYVHRIGRTGRAGASGHSISLACEEYALNLPAIETYIGHSIPVSKYNPDALMTDLPKPLRLTRPRTGNGPRRTGAPRNRRRSG</sequence>
<proteinExistence type="inferred from homology"/>
<protein>
    <recommendedName>
        <fullName evidence="2">ATP-dependent RNA helicase RhlB</fullName>
        <ecNumber evidence="2">3.6.4.13</ecNumber>
    </recommendedName>
</protein>
<reference key="1">
    <citation type="journal article" date="2002" name="Nucleic Acids Res.">
        <title>Genome sequence of Shigella flexneri 2a: insights into pathogenicity through comparison with genomes of Escherichia coli K12 and O157.</title>
        <authorList>
            <person name="Jin Q."/>
            <person name="Yuan Z."/>
            <person name="Xu J."/>
            <person name="Wang Y."/>
            <person name="Shen Y."/>
            <person name="Lu W."/>
            <person name="Wang J."/>
            <person name="Liu H."/>
            <person name="Yang J."/>
            <person name="Yang F."/>
            <person name="Zhang X."/>
            <person name="Zhang J."/>
            <person name="Yang G."/>
            <person name="Wu H."/>
            <person name="Qu D."/>
            <person name="Dong J."/>
            <person name="Sun L."/>
            <person name="Xue Y."/>
            <person name="Zhao A."/>
            <person name="Gao Y."/>
            <person name="Zhu J."/>
            <person name="Kan B."/>
            <person name="Ding K."/>
            <person name="Chen S."/>
            <person name="Cheng H."/>
            <person name="Yao Z."/>
            <person name="He B."/>
            <person name="Chen R."/>
            <person name="Ma D."/>
            <person name="Qiang B."/>
            <person name="Wen Y."/>
            <person name="Hou Y."/>
            <person name="Yu J."/>
        </authorList>
    </citation>
    <scope>NUCLEOTIDE SEQUENCE [LARGE SCALE GENOMIC DNA]</scope>
    <source>
        <strain>301 / Serotype 2a</strain>
    </source>
</reference>
<reference key="2">
    <citation type="journal article" date="2003" name="Infect. Immun.">
        <title>Complete genome sequence and comparative genomics of Shigella flexneri serotype 2a strain 2457T.</title>
        <authorList>
            <person name="Wei J."/>
            <person name="Goldberg M.B."/>
            <person name="Burland V."/>
            <person name="Venkatesan M.M."/>
            <person name="Deng W."/>
            <person name="Fournier G."/>
            <person name="Mayhew G.F."/>
            <person name="Plunkett G. III"/>
            <person name="Rose D.J."/>
            <person name="Darling A."/>
            <person name="Mau B."/>
            <person name="Perna N.T."/>
            <person name="Payne S.M."/>
            <person name="Runyen-Janecky L.J."/>
            <person name="Zhou S."/>
            <person name="Schwartz D.C."/>
            <person name="Blattner F.R."/>
        </authorList>
    </citation>
    <scope>NUCLEOTIDE SEQUENCE [LARGE SCALE GENOMIC DNA]</scope>
    <source>
        <strain>ATCC 700930 / 2457T / Serotype 2a</strain>
    </source>
</reference>
<accession>P0A8K0</accession>
<accession>P24229</accession>
<gene>
    <name evidence="2" type="primary">rhlB</name>
    <name type="ordered locus">SF3853</name>
    <name type="ordered locus">S3906</name>
</gene>
<feature type="initiator methionine" description="Removed" evidence="1">
    <location>
        <position position="1"/>
    </location>
</feature>
<feature type="chain" id="PRO_0000200785" description="ATP-dependent RNA helicase RhlB">
    <location>
        <begin position="2"/>
        <end position="421"/>
    </location>
</feature>
<feature type="domain" description="Helicase ATP-binding" evidence="2">
    <location>
        <begin position="40"/>
        <end position="219"/>
    </location>
</feature>
<feature type="domain" description="Helicase C-terminal" evidence="2">
    <location>
        <begin position="245"/>
        <end position="390"/>
    </location>
</feature>
<feature type="region of interest" description="Disordered" evidence="3">
    <location>
        <begin position="392"/>
        <end position="421"/>
    </location>
</feature>
<feature type="short sequence motif" description="Q motif">
    <location>
        <begin position="9"/>
        <end position="37"/>
    </location>
</feature>
<feature type="short sequence motif" description="DEAD box">
    <location>
        <begin position="165"/>
        <end position="168"/>
    </location>
</feature>
<feature type="compositionally biased region" description="Low complexity" evidence="3">
    <location>
        <begin position="402"/>
        <end position="414"/>
    </location>
</feature>
<feature type="binding site" evidence="2">
    <location>
        <begin position="53"/>
        <end position="60"/>
    </location>
    <ligand>
        <name>ATP</name>
        <dbReference type="ChEBI" id="CHEBI:30616"/>
    </ligand>
</feature>